<organism>
    <name type="scientific">Kocuria rhizophila (strain ATCC 9341 / DSM 348 / NBRC 103217 / DC2201)</name>
    <dbReference type="NCBI Taxonomy" id="378753"/>
    <lineage>
        <taxon>Bacteria</taxon>
        <taxon>Bacillati</taxon>
        <taxon>Actinomycetota</taxon>
        <taxon>Actinomycetes</taxon>
        <taxon>Micrococcales</taxon>
        <taxon>Micrococcaceae</taxon>
        <taxon>Kocuria</taxon>
    </lineage>
</organism>
<protein>
    <recommendedName>
        <fullName evidence="1">Small ribosomal subunit protein uS2</fullName>
    </recommendedName>
    <alternativeName>
        <fullName evidence="3">30S ribosomal protein S2</fullName>
    </alternativeName>
</protein>
<comment type="similarity">
    <text evidence="1">Belongs to the universal ribosomal protein uS2 family.</text>
</comment>
<keyword id="KW-1185">Reference proteome</keyword>
<keyword id="KW-0687">Ribonucleoprotein</keyword>
<keyword id="KW-0689">Ribosomal protein</keyword>
<sequence>MPVVTMRQMLDNGVHFGHQTRRWNPKMKRFIFTERNGIYIIDLQQSLGFIDKAYEAVKATVAHGGTILFVGTKKQAQEAIAEQATRVGMPYVNHRWLGGMLTNFQTVSKRIDRMKELEEVDFDDVAGSQYTKKELLLLRREKEKLERTLGGIRNLTKTPSLIWIVDTKKEHLAVDEAQKLGVPIVAILDTNCDPDEVAFPIPGNDDSIRSVSLLTRVVADAVAEGLMKRHNGKSNAAEEPMAEWERELLEQHEEQKSQDAAPAEQSAPAAEAPAETEQKDAPAAE</sequence>
<name>RS2_KOCRD</name>
<reference key="1">
    <citation type="journal article" date="2008" name="J. Bacteriol.">
        <title>Complete genome sequence of the soil actinomycete Kocuria rhizophila.</title>
        <authorList>
            <person name="Takarada H."/>
            <person name="Sekine M."/>
            <person name="Kosugi H."/>
            <person name="Matsuo Y."/>
            <person name="Fujisawa T."/>
            <person name="Omata S."/>
            <person name="Kishi E."/>
            <person name="Shimizu A."/>
            <person name="Tsukatani N."/>
            <person name="Tanikawa S."/>
            <person name="Fujita N."/>
            <person name="Harayama S."/>
        </authorList>
    </citation>
    <scope>NUCLEOTIDE SEQUENCE [LARGE SCALE GENOMIC DNA]</scope>
    <source>
        <strain>ATCC 9341 / DSM 348 / NBRC 103217 / DC2201</strain>
    </source>
</reference>
<feature type="chain" id="PRO_1000115029" description="Small ribosomal subunit protein uS2">
    <location>
        <begin position="1"/>
        <end position="285"/>
    </location>
</feature>
<feature type="region of interest" description="Disordered" evidence="2">
    <location>
        <begin position="229"/>
        <end position="285"/>
    </location>
</feature>
<feature type="compositionally biased region" description="Basic and acidic residues" evidence="2">
    <location>
        <begin position="243"/>
        <end position="257"/>
    </location>
</feature>
<feature type="compositionally biased region" description="Low complexity" evidence="2">
    <location>
        <begin position="260"/>
        <end position="275"/>
    </location>
</feature>
<feature type="compositionally biased region" description="Basic and acidic residues" evidence="2">
    <location>
        <begin position="276"/>
        <end position="285"/>
    </location>
</feature>
<proteinExistence type="inferred from homology"/>
<evidence type="ECO:0000255" key="1">
    <source>
        <dbReference type="HAMAP-Rule" id="MF_00291"/>
    </source>
</evidence>
<evidence type="ECO:0000256" key="2">
    <source>
        <dbReference type="SAM" id="MobiDB-lite"/>
    </source>
</evidence>
<evidence type="ECO:0000305" key="3"/>
<gene>
    <name evidence="1" type="primary">rpsB</name>
    <name type="ordered locus">KRH_16250</name>
</gene>
<accession>B2GKT6</accession>
<dbReference type="EMBL" id="AP009152">
    <property type="protein sequence ID" value="BAG29972.1"/>
    <property type="molecule type" value="Genomic_DNA"/>
</dbReference>
<dbReference type="RefSeq" id="WP_012398693.1">
    <property type="nucleotide sequence ID" value="NC_010617.1"/>
</dbReference>
<dbReference type="SMR" id="B2GKT6"/>
<dbReference type="STRING" id="378753.KRH_16250"/>
<dbReference type="KEGG" id="krh:KRH_16250"/>
<dbReference type="eggNOG" id="COG0052">
    <property type="taxonomic scope" value="Bacteria"/>
</dbReference>
<dbReference type="HOGENOM" id="CLU_040318_2_3_11"/>
<dbReference type="OrthoDB" id="9808036at2"/>
<dbReference type="Proteomes" id="UP000008838">
    <property type="component" value="Chromosome"/>
</dbReference>
<dbReference type="GO" id="GO:0022627">
    <property type="term" value="C:cytosolic small ribosomal subunit"/>
    <property type="evidence" value="ECO:0007669"/>
    <property type="project" value="TreeGrafter"/>
</dbReference>
<dbReference type="GO" id="GO:0003735">
    <property type="term" value="F:structural constituent of ribosome"/>
    <property type="evidence" value="ECO:0007669"/>
    <property type="project" value="InterPro"/>
</dbReference>
<dbReference type="GO" id="GO:0006412">
    <property type="term" value="P:translation"/>
    <property type="evidence" value="ECO:0007669"/>
    <property type="project" value="UniProtKB-UniRule"/>
</dbReference>
<dbReference type="CDD" id="cd01425">
    <property type="entry name" value="RPS2"/>
    <property type="match status" value="1"/>
</dbReference>
<dbReference type="FunFam" id="1.10.287.610:FF:000001">
    <property type="entry name" value="30S ribosomal protein S2"/>
    <property type="match status" value="1"/>
</dbReference>
<dbReference type="Gene3D" id="3.40.50.10490">
    <property type="entry name" value="Glucose-6-phosphate isomerase like protein, domain 1"/>
    <property type="match status" value="1"/>
</dbReference>
<dbReference type="Gene3D" id="1.10.287.610">
    <property type="entry name" value="Helix hairpin bin"/>
    <property type="match status" value="1"/>
</dbReference>
<dbReference type="HAMAP" id="MF_00291_B">
    <property type="entry name" value="Ribosomal_uS2_B"/>
    <property type="match status" value="1"/>
</dbReference>
<dbReference type="InterPro" id="IPR001865">
    <property type="entry name" value="Ribosomal_uS2"/>
</dbReference>
<dbReference type="InterPro" id="IPR005706">
    <property type="entry name" value="Ribosomal_uS2_bac/mit/plastid"/>
</dbReference>
<dbReference type="InterPro" id="IPR023591">
    <property type="entry name" value="Ribosomal_uS2_flav_dom_sf"/>
</dbReference>
<dbReference type="NCBIfam" id="TIGR01011">
    <property type="entry name" value="rpsB_bact"/>
    <property type="match status" value="1"/>
</dbReference>
<dbReference type="PANTHER" id="PTHR12534">
    <property type="entry name" value="30S RIBOSOMAL PROTEIN S2 PROKARYOTIC AND ORGANELLAR"/>
    <property type="match status" value="1"/>
</dbReference>
<dbReference type="PANTHER" id="PTHR12534:SF0">
    <property type="entry name" value="SMALL RIBOSOMAL SUBUNIT PROTEIN US2M"/>
    <property type="match status" value="1"/>
</dbReference>
<dbReference type="Pfam" id="PF00318">
    <property type="entry name" value="Ribosomal_S2"/>
    <property type="match status" value="1"/>
</dbReference>
<dbReference type="PRINTS" id="PR00395">
    <property type="entry name" value="RIBOSOMALS2"/>
</dbReference>
<dbReference type="SUPFAM" id="SSF52313">
    <property type="entry name" value="Ribosomal protein S2"/>
    <property type="match status" value="1"/>
</dbReference>